<dbReference type="EMBL" id="AE000513">
    <property type="protein sequence ID" value="AAF11418.1"/>
    <property type="molecule type" value="Genomic_DNA"/>
</dbReference>
<dbReference type="PIR" id="C75344">
    <property type="entry name" value="C75344"/>
</dbReference>
<dbReference type="RefSeq" id="NP_295588.1">
    <property type="nucleotide sequence ID" value="NC_001263.1"/>
</dbReference>
<dbReference type="RefSeq" id="WP_010888500.1">
    <property type="nucleotide sequence ID" value="NC_001263.1"/>
</dbReference>
<dbReference type="SMR" id="Q9RTA0"/>
<dbReference type="FunCoup" id="Q9RTA0">
    <property type="interactions" value="212"/>
</dbReference>
<dbReference type="STRING" id="243230.DR_1865"/>
<dbReference type="PaxDb" id="243230-DR_1865"/>
<dbReference type="EnsemblBacteria" id="AAF11418">
    <property type="protein sequence ID" value="AAF11418"/>
    <property type="gene ID" value="DR_1865"/>
</dbReference>
<dbReference type="GeneID" id="69518104"/>
<dbReference type="KEGG" id="dra:DR_1865"/>
<dbReference type="PATRIC" id="fig|243230.17.peg.2077"/>
<dbReference type="eggNOG" id="COG2001">
    <property type="taxonomic scope" value="Bacteria"/>
</dbReference>
<dbReference type="HOGENOM" id="CLU_107907_0_3_0"/>
<dbReference type="InParanoid" id="Q9RTA0"/>
<dbReference type="OrthoDB" id="9807753at2"/>
<dbReference type="Proteomes" id="UP000002524">
    <property type="component" value="Chromosome 1"/>
</dbReference>
<dbReference type="GO" id="GO:0005737">
    <property type="term" value="C:cytoplasm"/>
    <property type="evidence" value="ECO:0007669"/>
    <property type="project" value="UniProtKB-UniRule"/>
</dbReference>
<dbReference type="GO" id="GO:0009295">
    <property type="term" value="C:nucleoid"/>
    <property type="evidence" value="ECO:0007669"/>
    <property type="project" value="UniProtKB-SubCell"/>
</dbReference>
<dbReference type="GO" id="GO:0003700">
    <property type="term" value="F:DNA-binding transcription factor activity"/>
    <property type="evidence" value="ECO:0000318"/>
    <property type="project" value="GO_Central"/>
</dbReference>
<dbReference type="GO" id="GO:0000976">
    <property type="term" value="F:transcription cis-regulatory region binding"/>
    <property type="evidence" value="ECO:0000318"/>
    <property type="project" value="GO_Central"/>
</dbReference>
<dbReference type="GO" id="GO:2000143">
    <property type="term" value="P:negative regulation of DNA-templated transcription initiation"/>
    <property type="evidence" value="ECO:0000318"/>
    <property type="project" value="GO_Central"/>
</dbReference>
<dbReference type="CDD" id="cd16321">
    <property type="entry name" value="MraZ_C"/>
    <property type="match status" value="1"/>
</dbReference>
<dbReference type="CDD" id="cd16320">
    <property type="entry name" value="MraZ_N"/>
    <property type="match status" value="1"/>
</dbReference>
<dbReference type="Gene3D" id="3.40.1550.20">
    <property type="entry name" value="Transcriptional regulator MraZ domain"/>
    <property type="match status" value="1"/>
</dbReference>
<dbReference type="HAMAP" id="MF_01008">
    <property type="entry name" value="MraZ"/>
    <property type="match status" value="1"/>
</dbReference>
<dbReference type="InterPro" id="IPR003444">
    <property type="entry name" value="MraZ"/>
</dbReference>
<dbReference type="InterPro" id="IPR035644">
    <property type="entry name" value="MraZ_C"/>
</dbReference>
<dbReference type="InterPro" id="IPR020603">
    <property type="entry name" value="MraZ_dom"/>
</dbReference>
<dbReference type="InterPro" id="IPR035642">
    <property type="entry name" value="MraZ_N"/>
</dbReference>
<dbReference type="InterPro" id="IPR038619">
    <property type="entry name" value="MraZ_sf"/>
</dbReference>
<dbReference type="InterPro" id="IPR007159">
    <property type="entry name" value="SpoVT-AbrB_dom"/>
</dbReference>
<dbReference type="InterPro" id="IPR037914">
    <property type="entry name" value="SpoVT-AbrB_sf"/>
</dbReference>
<dbReference type="NCBIfam" id="TIGR00242">
    <property type="entry name" value="division/cell wall cluster transcriptional repressor MraZ"/>
    <property type="match status" value="1"/>
</dbReference>
<dbReference type="PANTHER" id="PTHR34701">
    <property type="entry name" value="TRANSCRIPTIONAL REGULATOR MRAZ"/>
    <property type="match status" value="1"/>
</dbReference>
<dbReference type="PANTHER" id="PTHR34701:SF1">
    <property type="entry name" value="TRANSCRIPTIONAL REGULATOR MRAZ"/>
    <property type="match status" value="1"/>
</dbReference>
<dbReference type="Pfam" id="PF02381">
    <property type="entry name" value="MraZ"/>
    <property type="match status" value="2"/>
</dbReference>
<dbReference type="SUPFAM" id="SSF89447">
    <property type="entry name" value="AbrB/MazE/MraZ-like"/>
    <property type="match status" value="1"/>
</dbReference>
<dbReference type="PROSITE" id="PS51740">
    <property type="entry name" value="SPOVT_ABRB"/>
    <property type="match status" value="2"/>
</dbReference>
<feature type="chain" id="PRO_0000108476" description="Transcriptional regulator MraZ">
    <location>
        <begin position="1"/>
        <end position="142"/>
    </location>
</feature>
<feature type="domain" description="SpoVT-AbrB 1" evidence="2">
    <location>
        <begin position="5"/>
        <end position="47"/>
    </location>
</feature>
<feature type="domain" description="SpoVT-AbrB 2" evidence="2">
    <location>
        <begin position="76"/>
        <end position="119"/>
    </location>
</feature>
<gene>
    <name evidence="1" type="primary">mraZ</name>
    <name type="ordered locus">DR_1865</name>
</gene>
<proteinExistence type="inferred from homology"/>
<name>MRAZ_DEIRA</name>
<protein>
    <recommendedName>
        <fullName>Transcriptional regulator MraZ</fullName>
    </recommendedName>
</protein>
<comment type="subunit">
    <text evidence="1">Forms oligomers.</text>
</comment>
<comment type="subcellular location">
    <subcellularLocation>
        <location evidence="1">Cytoplasm</location>
        <location evidence="1">Nucleoid</location>
    </subcellularLocation>
</comment>
<comment type="similarity">
    <text evidence="1">Belongs to the MraZ family.</text>
</comment>
<reference key="1">
    <citation type="journal article" date="1999" name="Science">
        <title>Genome sequence of the radioresistant bacterium Deinococcus radiodurans R1.</title>
        <authorList>
            <person name="White O."/>
            <person name="Eisen J.A."/>
            <person name="Heidelberg J.F."/>
            <person name="Hickey E.K."/>
            <person name="Peterson J.D."/>
            <person name="Dodson R.J."/>
            <person name="Haft D.H."/>
            <person name="Gwinn M.L."/>
            <person name="Nelson W.C."/>
            <person name="Richardson D.L."/>
            <person name="Moffat K.S."/>
            <person name="Qin H."/>
            <person name="Jiang L."/>
            <person name="Pamphile W."/>
            <person name="Crosby M."/>
            <person name="Shen M."/>
            <person name="Vamathevan J.J."/>
            <person name="Lam P."/>
            <person name="McDonald L.A."/>
            <person name="Utterback T.R."/>
            <person name="Zalewski C."/>
            <person name="Makarova K.S."/>
            <person name="Aravind L."/>
            <person name="Daly M.J."/>
            <person name="Minton K.W."/>
            <person name="Fleischmann R.D."/>
            <person name="Ketchum K.A."/>
            <person name="Nelson K.E."/>
            <person name="Salzberg S.L."/>
            <person name="Smith H.O."/>
            <person name="Venter J.C."/>
            <person name="Fraser C.M."/>
        </authorList>
    </citation>
    <scope>NUCLEOTIDE SEQUENCE [LARGE SCALE GENOMIC DNA]</scope>
    <source>
        <strain>ATCC 13939 / DSM 20539 / JCM 16871 / CCUG 27074 / LMG 4051 / NBRC 15346 / NCIMB 9279 / VKM B-1422 / R1</strain>
    </source>
</reference>
<keyword id="KW-0963">Cytoplasm</keyword>
<keyword id="KW-0238">DNA-binding</keyword>
<keyword id="KW-1185">Reference proteome</keyword>
<keyword id="KW-0677">Repeat</keyword>
<keyword id="KW-0804">Transcription</keyword>
<keyword id="KW-0805">Transcription regulation</keyword>
<sequence length="142" mass="15734">MPFGEYPYTIDDKGRVVMPPAFREFVEDGLILTRGMEGCLYAFPLPGWKRVEEQLEGLPLTDAGSRAFVRFFYSGASKARLDNQSRVSIPQTLRAFAGLDSDVIVAGAPGRLEFWNPQRWEAAIAAVQAEPPQPDLLANFVA</sequence>
<accession>Q9RTA0</accession>
<organism>
    <name type="scientific">Deinococcus radiodurans (strain ATCC 13939 / DSM 20539 / JCM 16871 / CCUG 27074 / LMG 4051 / NBRC 15346 / NCIMB 9279 / VKM B-1422 / R1)</name>
    <dbReference type="NCBI Taxonomy" id="243230"/>
    <lineage>
        <taxon>Bacteria</taxon>
        <taxon>Thermotogati</taxon>
        <taxon>Deinococcota</taxon>
        <taxon>Deinococci</taxon>
        <taxon>Deinococcales</taxon>
        <taxon>Deinococcaceae</taxon>
        <taxon>Deinococcus</taxon>
    </lineage>
</organism>
<evidence type="ECO:0000255" key="1">
    <source>
        <dbReference type="HAMAP-Rule" id="MF_01008"/>
    </source>
</evidence>
<evidence type="ECO:0000255" key="2">
    <source>
        <dbReference type="PROSITE-ProRule" id="PRU01076"/>
    </source>
</evidence>